<reference key="1">
    <citation type="submission" date="2007-05" db="EMBL/GenBank/DDBJ databases">
        <title>Complete sequence of chromosome of Acidiphilium cryptum JF-5.</title>
        <authorList>
            <consortium name="US DOE Joint Genome Institute"/>
            <person name="Copeland A."/>
            <person name="Lucas S."/>
            <person name="Lapidus A."/>
            <person name="Barry K."/>
            <person name="Detter J.C."/>
            <person name="Glavina del Rio T."/>
            <person name="Hammon N."/>
            <person name="Israni S."/>
            <person name="Dalin E."/>
            <person name="Tice H."/>
            <person name="Pitluck S."/>
            <person name="Sims D."/>
            <person name="Brettin T."/>
            <person name="Bruce D."/>
            <person name="Han C."/>
            <person name="Schmutz J."/>
            <person name="Larimer F."/>
            <person name="Land M."/>
            <person name="Hauser L."/>
            <person name="Kyrpides N."/>
            <person name="Kim E."/>
            <person name="Magnuson T."/>
            <person name="Richardson P."/>
        </authorList>
    </citation>
    <scope>NUCLEOTIDE SEQUENCE [LARGE SCALE GENOMIC DNA]</scope>
    <source>
        <strain>JF-5</strain>
    </source>
</reference>
<dbReference type="EMBL" id="CP000697">
    <property type="protein sequence ID" value="ABQ30129.1"/>
    <property type="molecule type" value="Genomic_DNA"/>
</dbReference>
<dbReference type="RefSeq" id="WP_007422523.1">
    <property type="nucleotide sequence ID" value="NC_009484.1"/>
</dbReference>
<dbReference type="SMR" id="A5FWZ7"/>
<dbReference type="STRING" id="349163.Acry_0910"/>
<dbReference type="KEGG" id="acr:Acry_0910"/>
<dbReference type="eggNOG" id="COG0782">
    <property type="taxonomic scope" value="Bacteria"/>
</dbReference>
<dbReference type="HOGENOM" id="CLU_101379_2_0_5"/>
<dbReference type="Proteomes" id="UP000000245">
    <property type="component" value="Chromosome"/>
</dbReference>
<dbReference type="GO" id="GO:0003677">
    <property type="term" value="F:DNA binding"/>
    <property type="evidence" value="ECO:0007669"/>
    <property type="project" value="UniProtKB-UniRule"/>
</dbReference>
<dbReference type="GO" id="GO:0070063">
    <property type="term" value="F:RNA polymerase binding"/>
    <property type="evidence" value="ECO:0007669"/>
    <property type="project" value="InterPro"/>
</dbReference>
<dbReference type="GO" id="GO:0006354">
    <property type="term" value="P:DNA-templated transcription elongation"/>
    <property type="evidence" value="ECO:0007669"/>
    <property type="project" value="TreeGrafter"/>
</dbReference>
<dbReference type="GO" id="GO:0032784">
    <property type="term" value="P:regulation of DNA-templated transcription elongation"/>
    <property type="evidence" value="ECO:0007669"/>
    <property type="project" value="UniProtKB-UniRule"/>
</dbReference>
<dbReference type="FunFam" id="1.10.287.180:FF:000001">
    <property type="entry name" value="Transcription elongation factor GreA"/>
    <property type="match status" value="1"/>
</dbReference>
<dbReference type="FunFam" id="3.10.50.30:FF:000001">
    <property type="entry name" value="Transcription elongation factor GreA"/>
    <property type="match status" value="1"/>
</dbReference>
<dbReference type="Gene3D" id="3.10.50.30">
    <property type="entry name" value="Transcription elongation factor, GreA/GreB, C-terminal domain"/>
    <property type="match status" value="1"/>
</dbReference>
<dbReference type="Gene3D" id="1.10.287.180">
    <property type="entry name" value="Transcription elongation factor, GreA/GreB, N-terminal domain"/>
    <property type="match status" value="1"/>
</dbReference>
<dbReference type="HAMAP" id="MF_00105">
    <property type="entry name" value="GreA_GreB"/>
    <property type="match status" value="1"/>
</dbReference>
<dbReference type="InterPro" id="IPR036953">
    <property type="entry name" value="GreA/GreB_C_sf"/>
</dbReference>
<dbReference type="InterPro" id="IPR018151">
    <property type="entry name" value="TF_GreA/GreB_CS"/>
</dbReference>
<dbReference type="InterPro" id="IPR006359">
    <property type="entry name" value="Tscrpt_elong_fac_GreA"/>
</dbReference>
<dbReference type="InterPro" id="IPR028624">
    <property type="entry name" value="Tscrpt_elong_fac_GreA/B"/>
</dbReference>
<dbReference type="InterPro" id="IPR001437">
    <property type="entry name" value="Tscrpt_elong_fac_GreA/B_C"/>
</dbReference>
<dbReference type="InterPro" id="IPR023459">
    <property type="entry name" value="Tscrpt_elong_fac_GreA/B_fam"/>
</dbReference>
<dbReference type="InterPro" id="IPR022691">
    <property type="entry name" value="Tscrpt_elong_fac_GreA/B_N"/>
</dbReference>
<dbReference type="InterPro" id="IPR036805">
    <property type="entry name" value="Tscrpt_elong_fac_GreA/B_N_sf"/>
</dbReference>
<dbReference type="NCBIfam" id="TIGR01462">
    <property type="entry name" value="greA"/>
    <property type="match status" value="1"/>
</dbReference>
<dbReference type="NCBIfam" id="NF001261">
    <property type="entry name" value="PRK00226.1-2"/>
    <property type="match status" value="1"/>
</dbReference>
<dbReference type="NCBIfam" id="NF001263">
    <property type="entry name" value="PRK00226.1-4"/>
    <property type="match status" value="1"/>
</dbReference>
<dbReference type="NCBIfam" id="NF001264">
    <property type="entry name" value="PRK00226.1-5"/>
    <property type="match status" value="1"/>
</dbReference>
<dbReference type="PANTHER" id="PTHR30437">
    <property type="entry name" value="TRANSCRIPTION ELONGATION FACTOR GREA"/>
    <property type="match status" value="1"/>
</dbReference>
<dbReference type="PANTHER" id="PTHR30437:SF4">
    <property type="entry name" value="TRANSCRIPTION ELONGATION FACTOR GREA"/>
    <property type="match status" value="1"/>
</dbReference>
<dbReference type="Pfam" id="PF01272">
    <property type="entry name" value="GreA_GreB"/>
    <property type="match status" value="1"/>
</dbReference>
<dbReference type="Pfam" id="PF03449">
    <property type="entry name" value="GreA_GreB_N"/>
    <property type="match status" value="1"/>
</dbReference>
<dbReference type="PIRSF" id="PIRSF006092">
    <property type="entry name" value="GreA_GreB"/>
    <property type="match status" value="1"/>
</dbReference>
<dbReference type="SUPFAM" id="SSF54534">
    <property type="entry name" value="FKBP-like"/>
    <property type="match status" value="1"/>
</dbReference>
<dbReference type="SUPFAM" id="SSF46557">
    <property type="entry name" value="GreA transcript cleavage protein, N-terminal domain"/>
    <property type="match status" value="1"/>
</dbReference>
<dbReference type="PROSITE" id="PS00829">
    <property type="entry name" value="GREAB_1"/>
    <property type="match status" value="1"/>
</dbReference>
<dbReference type="PROSITE" id="PS00830">
    <property type="entry name" value="GREAB_2"/>
    <property type="match status" value="1"/>
</dbReference>
<name>GREA_ACICJ</name>
<keyword id="KW-0175">Coiled coil</keyword>
<keyword id="KW-0238">DNA-binding</keyword>
<keyword id="KW-1185">Reference proteome</keyword>
<keyword id="KW-0804">Transcription</keyword>
<keyword id="KW-0805">Transcription regulation</keyword>
<proteinExistence type="inferred from homology"/>
<protein>
    <recommendedName>
        <fullName evidence="1">Transcription elongation factor GreA</fullName>
    </recommendedName>
    <alternativeName>
        <fullName evidence="1">Transcript cleavage factor GreA</fullName>
    </alternativeName>
</protein>
<evidence type="ECO:0000255" key="1">
    <source>
        <dbReference type="HAMAP-Rule" id="MF_00105"/>
    </source>
</evidence>
<comment type="function">
    <text evidence="1">Necessary for efficient RNA polymerase transcription elongation past template-encoded arresting sites. The arresting sites in DNA have the property of trapping a certain fraction of elongating RNA polymerases that pass through, resulting in locked ternary complexes. Cleavage of the nascent transcript by cleavage factors such as GreA or GreB allows the resumption of elongation from the new 3'terminus. GreA releases sequences of 2 to 3 nucleotides.</text>
</comment>
<comment type="similarity">
    <text evidence="1">Belongs to the GreA/GreB family.</text>
</comment>
<gene>
    <name evidence="1" type="primary">greA</name>
    <name type="ordered locus">Acry_0910</name>
</gene>
<accession>A5FWZ7</accession>
<organism>
    <name type="scientific">Acidiphilium cryptum (strain JF-5)</name>
    <dbReference type="NCBI Taxonomy" id="349163"/>
    <lineage>
        <taxon>Bacteria</taxon>
        <taxon>Pseudomonadati</taxon>
        <taxon>Pseudomonadota</taxon>
        <taxon>Alphaproteobacteria</taxon>
        <taxon>Acetobacterales</taxon>
        <taxon>Acidocellaceae</taxon>
        <taxon>Acidiphilium</taxon>
    </lineage>
</organism>
<sequence length="157" mass="17048">MQKFPMTGPGLQNLEAELRHLKSEERPAIIRAIAEARSHGDLSENAEYHSARERQSFIEGRIAELEEIISAAEVIDPSTLSGDTVKFGAHVELIDEESDKEVTYQIVGVHEADIKAGRISVTSPLAKSLIGKKPGDTVSVPAPGGDRSYEILAVRFG</sequence>
<feature type="chain" id="PRO_1000034243" description="Transcription elongation factor GreA">
    <location>
        <begin position="1"/>
        <end position="157"/>
    </location>
</feature>
<feature type="coiled-coil region" evidence="1">
    <location>
        <begin position="46"/>
        <end position="73"/>
    </location>
</feature>